<comment type="function">
    <text evidence="4 5 6 7">Guanine nucleotide exchange factor (GEF) activating Rab12. Promotes the exchange of GDP to GTP, converting inactive GDP-bound Rab12 into its active GTP-bound form. Regulates autophagy in response to starvation through Rab12 activation (PubMed:24719330, PubMed:25925668, PubMed:28249939). Starvation leads to ULK1/2-dependent phosphorylation of Ser-554 and Ser-572, which in turn allows recruitment of 14-3-3 adapter proteins and leads to up-regulation of GEF activity towards Rab12 (PubMed:25925668). Also plays a role in protein transport from recycling endosomes to lysosomes, regulating, for instance, the degradation of the transferrin receptor and of the amino acid transporter PAT4 (PubMed:21718402, PubMed:24719330). Starvation also induces phosphorylation at Tyr-940, which leads to up-regulated GEF activity and initiates autophagy (PubMed:28249939).</text>
</comment>
<comment type="subunit">
    <text evidence="6 7">Forms oligomers (PubMed:28249939). Interacts with 6 of the 7 known isoforms of 14-3-3 proteins (PubMed:25925668).</text>
</comment>
<comment type="subcellular location">
    <subcellularLocation>
        <location evidence="7">Cytoplasm</location>
    </subcellularLocation>
    <text evidence="7">Transiently recruited to membranes to activate Rab12.</text>
</comment>
<comment type="domain">
    <text evidence="7">Inactive Dennd3 is found in a closed conformation, in which the linker region interacts with the DENN domain. Phosphorylation of Tyr-940 in the linker region intereferes with this interaction leading to an open conformation and enhances the GEF activity of the protein towards Rab12.</text>
</comment>
<comment type="sequence caution" evidence="8">
    <conflict type="erroneous initiation">
        <sequence resource="EMBL-CDS" id="BAC35269"/>
    </conflict>
</comment>
<comment type="sequence caution" evidence="8">
    <conflict type="erroneous initiation">
        <sequence resource="EMBL-CDS" id="BAD32324"/>
    </conflict>
</comment>
<gene>
    <name type="primary">Dennd3</name>
    <name type="synonym">Kiaa0870</name>
</gene>
<protein>
    <recommendedName>
        <fullName>DENN domain-containing protein 3</fullName>
    </recommendedName>
</protein>
<name>DEND3_MOUSE</name>
<reference key="1">
    <citation type="journal article" date="2004" name="DNA Res.">
        <title>Prediction of the coding sequences of mouse homologues of KIAA gene: IV. The complete nucleotide sequences of 500 mouse KIAA-homologous cDNAs identified by screening of terminal sequences of cDNA clones randomly sampled from size-fractionated libraries.</title>
        <authorList>
            <person name="Okazaki N."/>
            <person name="Kikuno R."/>
            <person name="Ohara R."/>
            <person name="Inamoto S."/>
            <person name="Koseki H."/>
            <person name="Hiraoka S."/>
            <person name="Saga Y."/>
            <person name="Seino S."/>
            <person name="Nishimura M."/>
            <person name="Kaisho T."/>
            <person name="Hoshino K."/>
            <person name="Kitamura H."/>
            <person name="Nagase T."/>
            <person name="Ohara O."/>
            <person name="Koga H."/>
        </authorList>
    </citation>
    <scope>NUCLEOTIDE SEQUENCE [LARGE SCALE MRNA]</scope>
</reference>
<reference key="2">
    <citation type="journal article" date="2004" name="Genome Res.">
        <title>The status, quality, and expansion of the NIH full-length cDNA project: the Mammalian Gene Collection (MGC).</title>
        <authorList>
            <consortium name="The MGC Project Team"/>
        </authorList>
    </citation>
    <scope>NUCLEOTIDE SEQUENCE [LARGE SCALE MRNA]</scope>
    <source>
        <tissue>Brain</tissue>
    </source>
</reference>
<reference key="3">
    <citation type="journal article" date="2005" name="Science">
        <title>The transcriptional landscape of the mammalian genome.</title>
        <authorList>
            <person name="Carninci P."/>
            <person name="Kasukawa T."/>
            <person name="Katayama S."/>
            <person name="Gough J."/>
            <person name="Frith M.C."/>
            <person name="Maeda N."/>
            <person name="Oyama R."/>
            <person name="Ravasi T."/>
            <person name="Lenhard B."/>
            <person name="Wells C."/>
            <person name="Kodzius R."/>
            <person name="Shimokawa K."/>
            <person name="Bajic V.B."/>
            <person name="Brenner S.E."/>
            <person name="Batalov S."/>
            <person name="Forrest A.R."/>
            <person name="Zavolan M."/>
            <person name="Davis M.J."/>
            <person name="Wilming L.G."/>
            <person name="Aidinis V."/>
            <person name="Allen J.E."/>
            <person name="Ambesi-Impiombato A."/>
            <person name="Apweiler R."/>
            <person name="Aturaliya R.N."/>
            <person name="Bailey T.L."/>
            <person name="Bansal M."/>
            <person name="Baxter L."/>
            <person name="Beisel K.W."/>
            <person name="Bersano T."/>
            <person name="Bono H."/>
            <person name="Chalk A.M."/>
            <person name="Chiu K.P."/>
            <person name="Choudhary V."/>
            <person name="Christoffels A."/>
            <person name="Clutterbuck D.R."/>
            <person name="Crowe M.L."/>
            <person name="Dalla E."/>
            <person name="Dalrymple B.P."/>
            <person name="de Bono B."/>
            <person name="Della Gatta G."/>
            <person name="di Bernardo D."/>
            <person name="Down T."/>
            <person name="Engstrom P."/>
            <person name="Fagiolini M."/>
            <person name="Faulkner G."/>
            <person name="Fletcher C.F."/>
            <person name="Fukushima T."/>
            <person name="Furuno M."/>
            <person name="Futaki S."/>
            <person name="Gariboldi M."/>
            <person name="Georgii-Hemming P."/>
            <person name="Gingeras T.R."/>
            <person name="Gojobori T."/>
            <person name="Green R.E."/>
            <person name="Gustincich S."/>
            <person name="Harbers M."/>
            <person name="Hayashi Y."/>
            <person name="Hensch T.K."/>
            <person name="Hirokawa N."/>
            <person name="Hill D."/>
            <person name="Huminiecki L."/>
            <person name="Iacono M."/>
            <person name="Ikeo K."/>
            <person name="Iwama A."/>
            <person name="Ishikawa T."/>
            <person name="Jakt M."/>
            <person name="Kanapin A."/>
            <person name="Katoh M."/>
            <person name="Kawasawa Y."/>
            <person name="Kelso J."/>
            <person name="Kitamura H."/>
            <person name="Kitano H."/>
            <person name="Kollias G."/>
            <person name="Krishnan S.P."/>
            <person name="Kruger A."/>
            <person name="Kummerfeld S.K."/>
            <person name="Kurochkin I.V."/>
            <person name="Lareau L.F."/>
            <person name="Lazarevic D."/>
            <person name="Lipovich L."/>
            <person name="Liu J."/>
            <person name="Liuni S."/>
            <person name="McWilliam S."/>
            <person name="Madan Babu M."/>
            <person name="Madera M."/>
            <person name="Marchionni L."/>
            <person name="Matsuda H."/>
            <person name="Matsuzawa S."/>
            <person name="Miki H."/>
            <person name="Mignone F."/>
            <person name="Miyake S."/>
            <person name="Morris K."/>
            <person name="Mottagui-Tabar S."/>
            <person name="Mulder N."/>
            <person name="Nakano N."/>
            <person name="Nakauchi H."/>
            <person name="Ng P."/>
            <person name="Nilsson R."/>
            <person name="Nishiguchi S."/>
            <person name="Nishikawa S."/>
            <person name="Nori F."/>
            <person name="Ohara O."/>
            <person name="Okazaki Y."/>
            <person name="Orlando V."/>
            <person name="Pang K.C."/>
            <person name="Pavan W.J."/>
            <person name="Pavesi G."/>
            <person name="Pesole G."/>
            <person name="Petrovsky N."/>
            <person name="Piazza S."/>
            <person name="Reed J."/>
            <person name="Reid J.F."/>
            <person name="Ring B.Z."/>
            <person name="Ringwald M."/>
            <person name="Rost B."/>
            <person name="Ruan Y."/>
            <person name="Salzberg S.L."/>
            <person name="Sandelin A."/>
            <person name="Schneider C."/>
            <person name="Schoenbach C."/>
            <person name="Sekiguchi K."/>
            <person name="Semple C.A."/>
            <person name="Seno S."/>
            <person name="Sessa L."/>
            <person name="Sheng Y."/>
            <person name="Shibata Y."/>
            <person name="Shimada H."/>
            <person name="Shimada K."/>
            <person name="Silva D."/>
            <person name="Sinclair B."/>
            <person name="Sperling S."/>
            <person name="Stupka E."/>
            <person name="Sugiura K."/>
            <person name="Sultana R."/>
            <person name="Takenaka Y."/>
            <person name="Taki K."/>
            <person name="Tammoja K."/>
            <person name="Tan S.L."/>
            <person name="Tang S."/>
            <person name="Taylor M.S."/>
            <person name="Tegner J."/>
            <person name="Teichmann S.A."/>
            <person name="Ueda H.R."/>
            <person name="van Nimwegen E."/>
            <person name="Verardo R."/>
            <person name="Wei C.L."/>
            <person name="Yagi K."/>
            <person name="Yamanishi H."/>
            <person name="Zabarovsky E."/>
            <person name="Zhu S."/>
            <person name="Zimmer A."/>
            <person name="Hide W."/>
            <person name="Bult C."/>
            <person name="Grimmond S.M."/>
            <person name="Teasdale R.D."/>
            <person name="Liu E.T."/>
            <person name="Brusic V."/>
            <person name="Quackenbush J."/>
            <person name="Wahlestedt C."/>
            <person name="Mattick J.S."/>
            <person name="Hume D.A."/>
            <person name="Kai C."/>
            <person name="Sasaki D."/>
            <person name="Tomaru Y."/>
            <person name="Fukuda S."/>
            <person name="Kanamori-Katayama M."/>
            <person name="Suzuki M."/>
            <person name="Aoki J."/>
            <person name="Arakawa T."/>
            <person name="Iida J."/>
            <person name="Imamura K."/>
            <person name="Itoh M."/>
            <person name="Kato T."/>
            <person name="Kawaji H."/>
            <person name="Kawagashira N."/>
            <person name="Kawashima T."/>
            <person name="Kojima M."/>
            <person name="Kondo S."/>
            <person name="Konno H."/>
            <person name="Nakano K."/>
            <person name="Ninomiya N."/>
            <person name="Nishio T."/>
            <person name="Okada M."/>
            <person name="Plessy C."/>
            <person name="Shibata K."/>
            <person name="Shiraki T."/>
            <person name="Suzuki S."/>
            <person name="Tagami M."/>
            <person name="Waki K."/>
            <person name="Watahiki A."/>
            <person name="Okamura-Oho Y."/>
            <person name="Suzuki H."/>
            <person name="Kawai J."/>
            <person name="Hayashizaki Y."/>
        </authorList>
    </citation>
    <scope>NUCLEOTIDE SEQUENCE [LARGE SCALE MRNA] OF 495-1274</scope>
    <source>
        <strain>C57BL/6J</strain>
        <tissue>Lung</tissue>
    </source>
</reference>
<reference key="4">
    <citation type="journal article" date="2010" name="Cell">
        <title>A tissue-specific atlas of mouse protein phosphorylation and expression.</title>
        <authorList>
            <person name="Huttlin E.L."/>
            <person name="Jedrychowski M.P."/>
            <person name="Elias J.E."/>
            <person name="Goswami T."/>
            <person name="Rad R."/>
            <person name="Beausoleil S.A."/>
            <person name="Villen J."/>
            <person name="Haas W."/>
            <person name="Sowa M.E."/>
            <person name="Gygi S.P."/>
        </authorList>
    </citation>
    <scope>IDENTIFICATION BY MASS SPECTROMETRY [LARGE SCALE ANALYSIS]</scope>
    <source>
        <tissue>Lung</tissue>
        <tissue>Spleen</tissue>
    </source>
</reference>
<reference key="5">
    <citation type="journal article" date="2011" name="Traffic">
        <title>Small GTPase Rab12 regulates constitutive degradation of transferrin receptor.</title>
        <authorList>
            <person name="Matsui T."/>
            <person name="Itoh T."/>
            <person name="Fukuda M."/>
        </authorList>
    </citation>
    <scope>FUNCTION</scope>
</reference>
<reference key="6">
    <citation type="journal article" date="2014" name="J. Biol. Chem.">
        <title>Dennd3 functions as a guanine nucleotide exchange factor for small GTPase Rab12 in mouse embryonic fibroblasts.</title>
        <authorList>
            <person name="Matsui T."/>
            <person name="Noguchi K."/>
            <person name="Fukuda M."/>
        </authorList>
    </citation>
    <scope>FUNCTION</scope>
</reference>
<reference key="7">
    <citation type="journal article" date="2015" name="EMBO Rep.">
        <title>Phosphorylation of the exchange factor DENND3 by ULK in response to starvation activates Rab12 and induces autophagy.</title>
        <authorList>
            <person name="Xu J."/>
            <person name="Fotouhi M."/>
            <person name="McPherson P.S."/>
        </authorList>
    </citation>
    <scope>FUNCTION</scope>
    <scope>SUBUNIT</scope>
    <scope>PHOSPHORYLATION AT SER-554 AND SER-572</scope>
    <scope>MUTAGENESIS OF SER-554 AND SER-572</scope>
</reference>
<reference key="8">
    <citation type="journal article" date="2017" name="J. Biol. Chem.">
        <title>Regulation of DENND3, the exchange factor for the small GTPase Rab12 through an intramolecular interaction.</title>
        <authorList>
            <person name="Xu J."/>
            <person name="McPherson P.S."/>
        </authorList>
    </citation>
    <scope>FUNCTION</scope>
    <scope>SUBCELLULAR LOCATION</scope>
    <scope>SUBUNIT</scope>
    <scope>PHOSPHORYLATION AT TYR-940</scope>
    <scope>MUTAGENESIS OF TYR-940</scope>
</reference>
<sequence length="1274" mass="143888">MAEPAARHLSLPSGLLELCALLGASQDSLRGLEQIAQKRGVKSASSLVPEVLSVFVPPFTTKEDGQVPGASCALGKGRRRSFRKKREKPRMEPWKSHPGDSKGPDSEDVTIPGGVDLLALPQLCFPGCVCVASEPKEDYIHFLVLTDVCGNRTYGVVAQYYRPLHDEYCFYNGKSHWEPSVISARCFVPFAVCVVSRFPYYNSLKDCLSCLLTHLKLCKDFEVDNHIKDFAARLSLIPSPPPGPLHLIFNMKPLQVVFPSRADPESPIVDLDLHLPLLCFRPEKVLQILTCILTEQRIVFFSSDWALLTLMAECFVAYLHPLQWQHTFVPILSGQMLDFVMAPTSFLMGCHLDHFEEVRKEADGLVLIDIDHGSVTCSKSSDDNIDIPDVPLLLAQTFIQRVQSLQLHPDLHLAHLSASTDLNEGRARRRAWQQTLNCKIQHITLQLLVGIFREVKNHLNYEHRVFNSEEFLKTRAAGDQQFYKQVLDTYMFHSFLKARLNGRMDAFARMDLDTQSEEDRIDRMLISPRRPTVEKMASRKASPLHITHRRMVVSMPNLQDISLPELPPRNSSLRIMDTSNCRSSSPVLKVTPKSTYMFKIPDIHFPLESQCVQAYYTDFVTLLSKAMALLGPGDSLLLARYFYLRGLLHLMQGQLLSALLDFQNLYKTDIGIFPADLVKRTVESMSASERAQAERTPELRRLITEVFDKHGEAPKADDAVKNFELPKKHMQLNDFVKRVQESGIVKDAVIIHRLFDALTFGHEKQIDPETFRDFYTCWKETEAEAQEVSLPALLMEHLDKNECVYKLSSSVKTNRGVGKIAMTQKRLFLLTEGRPGYVEIATFRNIEEVKNSTVAFLLLRIPTLKIKTVAKKEVFEANLKSECDLWHLMVKEMWAGKQLADDHKDPQYVQQALTNVLLMDAVVGTLQSPSAIHAASKLAYFDNMKKKSPMAVPKTTSETLKHKINPSAGETAPQAIEVLLYTPGRLDPAEKVEDAHPKLWCALNEGKVVVFDASSWTVHQHCFKVGSSKVNCMVMAEHNQVWVGSEDSVIYIINVHSMSCNKQLTDHRSPVTGLAVHNGKKPSEIYSCSLDGTVIAWNVSTLRVISRFQLSYGDLLSISLHNDRIWCCTVHKILVVTPQGFVRQELKHPKDASFLAFQLLPEEQQLWAASTGVSELYMWSLKDLDQPPQKTYLQDCSEVTCMIRVKRQIWVGGRGLSQGKTRGKIYVMDVEKVTVEKELVAHLDTVRTLCSAEDRYVLSGAGQEEGKIAIWKVE</sequence>
<organism>
    <name type="scientific">Mus musculus</name>
    <name type="common">Mouse</name>
    <dbReference type="NCBI Taxonomy" id="10090"/>
    <lineage>
        <taxon>Eukaryota</taxon>
        <taxon>Metazoa</taxon>
        <taxon>Chordata</taxon>
        <taxon>Craniata</taxon>
        <taxon>Vertebrata</taxon>
        <taxon>Euteleostomi</taxon>
        <taxon>Mammalia</taxon>
        <taxon>Eutheria</taxon>
        <taxon>Euarchontoglires</taxon>
        <taxon>Glires</taxon>
        <taxon>Rodentia</taxon>
        <taxon>Myomorpha</taxon>
        <taxon>Muroidea</taxon>
        <taxon>Muridae</taxon>
        <taxon>Murinae</taxon>
        <taxon>Mus</taxon>
        <taxon>Mus</taxon>
    </lineage>
</organism>
<evidence type="ECO:0000255" key="1"/>
<evidence type="ECO:0000255" key="2">
    <source>
        <dbReference type="PROSITE-ProRule" id="PRU00304"/>
    </source>
</evidence>
<evidence type="ECO:0000256" key="3">
    <source>
        <dbReference type="SAM" id="MobiDB-lite"/>
    </source>
</evidence>
<evidence type="ECO:0000269" key="4">
    <source>
    </source>
</evidence>
<evidence type="ECO:0000269" key="5">
    <source>
    </source>
</evidence>
<evidence type="ECO:0000269" key="6">
    <source>
    </source>
</evidence>
<evidence type="ECO:0000269" key="7">
    <source>
    </source>
</evidence>
<evidence type="ECO:0000305" key="8"/>
<evidence type="ECO:0007829" key="9">
    <source>
        <dbReference type="PDB" id="6B3Y"/>
    </source>
</evidence>
<keyword id="KW-0002">3D-structure</keyword>
<keyword id="KW-0963">Cytoplasm</keyword>
<keyword id="KW-0344">Guanine-nucleotide releasing factor</keyword>
<keyword id="KW-0597">Phosphoprotein</keyword>
<keyword id="KW-1185">Reference proteome</keyword>
<keyword id="KW-0677">Repeat</keyword>
<keyword id="KW-0853">WD repeat</keyword>
<feature type="chain" id="PRO_0000304673" description="DENN domain-containing protein 3">
    <location>
        <begin position="1"/>
        <end position="1274"/>
    </location>
</feature>
<feature type="domain" description="uDENN" evidence="2">
    <location>
        <begin position="75"/>
        <end position="245"/>
    </location>
</feature>
<feature type="domain" description="cDENN" evidence="2">
    <location>
        <begin position="268"/>
        <end position="400"/>
    </location>
</feature>
<feature type="domain" description="dDENN" evidence="2">
    <location>
        <begin position="402"/>
        <end position="506"/>
    </location>
</feature>
<feature type="repeat" description="WD 1" evidence="1">
    <location>
        <begin position="975"/>
        <end position="1013"/>
    </location>
</feature>
<feature type="repeat" description="WD 2" evidence="1">
    <location>
        <begin position="1019"/>
        <end position="1055"/>
    </location>
</feature>
<feature type="repeat" description="WD 3" evidence="1">
    <location>
        <begin position="1059"/>
        <end position="1099"/>
    </location>
</feature>
<feature type="repeat" description="WD 4" evidence="1">
    <location>
        <begin position="1103"/>
        <end position="1140"/>
    </location>
</feature>
<feature type="repeat" description="WD 5" evidence="1">
    <location>
        <begin position="1146"/>
        <end position="1181"/>
    </location>
</feature>
<feature type="repeat" description="WD 6" evidence="1">
    <location>
        <begin position="1186"/>
        <end position="1228"/>
    </location>
</feature>
<feature type="repeat" description="WD 7" evidence="1">
    <location>
        <begin position="1234"/>
        <end position="1273"/>
    </location>
</feature>
<feature type="region of interest" description="Disordered" evidence="3">
    <location>
        <begin position="65"/>
        <end position="108"/>
    </location>
</feature>
<feature type="region of interest" description="Linker" evidence="8">
    <location>
        <begin position="520"/>
        <end position="970"/>
    </location>
</feature>
<feature type="compositionally biased region" description="Basic residues" evidence="3">
    <location>
        <begin position="76"/>
        <end position="88"/>
    </location>
</feature>
<feature type="compositionally biased region" description="Basic and acidic residues" evidence="3">
    <location>
        <begin position="89"/>
        <end position="105"/>
    </location>
</feature>
<feature type="modified residue" description="Phosphoserine; by ULK1" evidence="6">
    <location>
        <position position="554"/>
    </location>
</feature>
<feature type="modified residue" description="Phosphoserine; by ULK1" evidence="6">
    <location>
        <position position="572"/>
    </location>
</feature>
<feature type="modified residue" description="Phosphotyrosine" evidence="7">
    <location>
        <position position="940"/>
    </location>
</feature>
<feature type="mutagenesis site" description="Abolishes interaction with 14-3-3 proteins." evidence="6">
    <original>S</original>
    <variation>A</variation>
    <location>
        <position position="554"/>
    </location>
</feature>
<feature type="mutagenesis site" description="Greatly reduces interaction with 14-3-3 proteins." evidence="6">
    <original>S</original>
    <variation>A</variation>
    <location>
        <position position="572"/>
    </location>
</feature>
<feature type="mutagenesis site" description="Abrogates the intramolecular linker-DENN domain interaction and enhances GEF activity towards Rab12." evidence="7">
    <original>Y</original>
    <variation>D</variation>
    <location>
        <position position="940"/>
    </location>
</feature>
<feature type="mutagenesis site" description="Retains the intramolecular linker-DENN domain interaction and impairs GEF activity towards Rab12." evidence="7">
    <original>Y</original>
    <variation>F</variation>
    <location>
        <position position="940"/>
    </location>
</feature>
<feature type="sequence conflict" description="In Ref. 1; BAD32324." evidence="8" ref="1">
    <original>P</original>
    <variation>S</variation>
    <location>
        <position position="126"/>
    </location>
</feature>
<feature type="sequence conflict" description="In Ref. 3; BAC35269." evidence="8" ref="3">
    <original>L</original>
    <variation>Q</variation>
    <location>
        <position position="1003"/>
    </location>
</feature>
<feature type="sequence conflict" description="In Ref. 3; BAC35269." evidence="8" ref="3">
    <original>T</original>
    <variation>N</variation>
    <location>
        <position position="1200"/>
    </location>
</feature>
<feature type="helix" evidence="9">
    <location>
        <begin position="732"/>
        <end position="742"/>
    </location>
</feature>
<feature type="helix" evidence="9">
    <location>
        <begin position="748"/>
        <end position="758"/>
    </location>
</feature>
<feature type="turn" evidence="9">
    <location>
        <begin position="759"/>
        <end position="761"/>
    </location>
</feature>
<feature type="helix" evidence="9">
    <location>
        <begin position="768"/>
        <end position="786"/>
    </location>
</feature>
<feature type="helix" evidence="9">
    <location>
        <begin position="792"/>
        <end position="796"/>
    </location>
</feature>
<feature type="strand" evidence="9">
    <location>
        <begin position="804"/>
        <end position="813"/>
    </location>
</feature>
<feature type="strand" evidence="9">
    <location>
        <begin position="816"/>
        <end position="835"/>
    </location>
</feature>
<feature type="strand" evidence="9">
    <location>
        <begin position="837"/>
        <end position="842"/>
    </location>
</feature>
<feature type="helix" evidence="9">
    <location>
        <begin position="843"/>
        <end position="845"/>
    </location>
</feature>
<feature type="strand" evidence="9">
    <location>
        <begin position="846"/>
        <end position="856"/>
    </location>
</feature>
<feature type="strand" evidence="9">
    <location>
        <begin position="859"/>
        <end position="868"/>
    </location>
</feature>
<feature type="strand" evidence="9">
    <location>
        <begin position="875"/>
        <end position="877"/>
    </location>
</feature>
<feature type="helix" evidence="9">
    <location>
        <begin position="880"/>
        <end position="882"/>
    </location>
</feature>
<feature type="helix" evidence="9">
    <location>
        <begin position="883"/>
        <end position="903"/>
    </location>
</feature>
<feature type="helix" evidence="9">
    <location>
        <begin position="907"/>
        <end position="926"/>
    </location>
</feature>
<feature type="helix" evidence="9">
    <location>
        <begin position="931"/>
        <end position="935"/>
    </location>
</feature>
<feature type="helix" evidence="9">
    <location>
        <begin position="936"/>
        <end position="938"/>
    </location>
</feature>
<feature type="helix" evidence="9">
    <location>
        <begin position="940"/>
        <end position="945"/>
    </location>
</feature>
<proteinExistence type="evidence at protein level"/>
<dbReference type="EMBL" id="AK173046">
    <property type="protein sequence ID" value="BAD32324.1"/>
    <property type="status" value="ALT_INIT"/>
    <property type="molecule type" value="mRNA"/>
</dbReference>
<dbReference type="EMBL" id="BC132389">
    <property type="protein sequence ID" value="AAI32390.2"/>
    <property type="molecule type" value="mRNA"/>
</dbReference>
<dbReference type="EMBL" id="BC137791">
    <property type="protein sequence ID" value="AAI37792.1"/>
    <property type="molecule type" value="mRNA"/>
</dbReference>
<dbReference type="EMBL" id="AK053114">
    <property type="protein sequence ID" value="BAC35269.1"/>
    <property type="status" value="ALT_INIT"/>
    <property type="molecule type" value="mRNA"/>
</dbReference>
<dbReference type="CCDS" id="CCDS37100.1"/>
<dbReference type="RefSeq" id="NP_001074535.1">
    <property type="nucleotide sequence ID" value="NM_001081066.2"/>
</dbReference>
<dbReference type="PDB" id="6B3Y">
    <property type="method" value="X-ray"/>
    <property type="resolution" value="1.85 A"/>
    <property type="chains" value="A/B=720-973"/>
</dbReference>
<dbReference type="PDBsum" id="6B3Y"/>
<dbReference type="SMR" id="A2RT67"/>
<dbReference type="BioGRID" id="222932">
    <property type="interactions" value="4"/>
</dbReference>
<dbReference type="FunCoup" id="A2RT67">
    <property type="interactions" value="817"/>
</dbReference>
<dbReference type="STRING" id="10090.ENSMUSP00000046774"/>
<dbReference type="iPTMnet" id="A2RT67"/>
<dbReference type="PhosphoSitePlus" id="A2RT67"/>
<dbReference type="PaxDb" id="10090-ENSMUSP00000046774"/>
<dbReference type="PeptideAtlas" id="A2RT67"/>
<dbReference type="ProteomicsDB" id="279624"/>
<dbReference type="Antibodypedia" id="27680">
    <property type="antibodies" value="34 antibodies from 15 providers"/>
</dbReference>
<dbReference type="Ensembl" id="ENSMUST00000043414.12">
    <property type="protein sequence ID" value="ENSMUSP00000046774.6"/>
    <property type="gene ID" value="ENSMUSG00000036661.15"/>
</dbReference>
<dbReference type="GeneID" id="105841"/>
<dbReference type="KEGG" id="mmu:105841"/>
<dbReference type="UCSC" id="uc007wce.1">
    <property type="organism name" value="mouse"/>
</dbReference>
<dbReference type="AGR" id="MGI:2146009"/>
<dbReference type="CTD" id="22898"/>
<dbReference type="MGI" id="MGI:2146009">
    <property type="gene designation" value="Dennd3"/>
</dbReference>
<dbReference type="VEuPathDB" id="HostDB:ENSMUSG00000036661"/>
<dbReference type="eggNOG" id="KOG2127">
    <property type="taxonomic scope" value="Eukaryota"/>
</dbReference>
<dbReference type="GeneTree" id="ENSGT00940000155784"/>
<dbReference type="InParanoid" id="A2RT67"/>
<dbReference type="OMA" id="CSRDSIM"/>
<dbReference type="OrthoDB" id="6019893at2759"/>
<dbReference type="PhylomeDB" id="A2RT67"/>
<dbReference type="TreeFam" id="TF331814"/>
<dbReference type="Reactome" id="R-MMU-8876198">
    <property type="pathway name" value="RAB GEFs exchange GTP for GDP on RABs"/>
</dbReference>
<dbReference type="BioGRID-ORCS" id="105841">
    <property type="hits" value="2 hits in 76 CRISPR screens"/>
</dbReference>
<dbReference type="ChiTaRS" id="Dennd3">
    <property type="organism name" value="mouse"/>
</dbReference>
<dbReference type="PRO" id="PR:A2RT67"/>
<dbReference type="Proteomes" id="UP000000589">
    <property type="component" value="Chromosome 15"/>
</dbReference>
<dbReference type="RNAct" id="A2RT67">
    <property type="molecule type" value="protein"/>
</dbReference>
<dbReference type="Bgee" id="ENSMUSG00000036661">
    <property type="expression patterns" value="Expressed in granulocyte and 156 other cell types or tissues"/>
</dbReference>
<dbReference type="ExpressionAtlas" id="A2RT67">
    <property type="expression patterns" value="baseline and differential"/>
</dbReference>
<dbReference type="GO" id="GO:0005737">
    <property type="term" value="C:cytoplasm"/>
    <property type="evidence" value="ECO:0007669"/>
    <property type="project" value="UniProtKB-SubCell"/>
</dbReference>
<dbReference type="GO" id="GO:0005085">
    <property type="term" value="F:guanyl-nucleotide exchange factor activity"/>
    <property type="evidence" value="ECO:0000316"/>
    <property type="project" value="UniProtKB"/>
</dbReference>
<dbReference type="GO" id="GO:0008333">
    <property type="term" value="P:endosome to lysosome transport"/>
    <property type="evidence" value="ECO:0000316"/>
    <property type="project" value="UniProtKB"/>
</dbReference>
<dbReference type="GO" id="GO:0030163">
    <property type="term" value="P:protein catabolic process"/>
    <property type="evidence" value="ECO:0000315"/>
    <property type="project" value="UniProtKB"/>
</dbReference>
<dbReference type="FunFam" id="3.40.50.11500:FF:000008">
    <property type="entry name" value="DENN domain containing 3"/>
    <property type="match status" value="1"/>
</dbReference>
<dbReference type="Gene3D" id="3.30.450.200">
    <property type="match status" value="1"/>
</dbReference>
<dbReference type="Gene3D" id="3.40.50.11500">
    <property type="match status" value="1"/>
</dbReference>
<dbReference type="Gene3D" id="2.130.10.10">
    <property type="entry name" value="YVTN repeat-like/Quinoprotein amine dehydrogenase"/>
    <property type="match status" value="1"/>
</dbReference>
<dbReference type="InterPro" id="IPR001194">
    <property type="entry name" value="cDENN_dom"/>
</dbReference>
<dbReference type="InterPro" id="IPR005112">
    <property type="entry name" value="dDENN_dom"/>
</dbReference>
<dbReference type="InterPro" id="IPR043153">
    <property type="entry name" value="DENN_C"/>
</dbReference>
<dbReference type="InterPro" id="IPR051696">
    <property type="entry name" value="DENN_Domain_GEFs"/>
</dbReference>
<dbReference type="InterPro" id="IPR037516">
    <property type="entry name" value="Tripartite_DENN"/>
</dbReference>
<dbReference type="InterPro" id="IPR015943">
    <property type="entry name" value="WD40/YVTN_repeat-like_dom_sf"/>
</dbReference>
<dbReference type="InterPro" id="IPR019775">
    <property type="entry name" value="WD40_repeat_CS"/>
</dbReference>
<dbReference type="InterPro" id="IPR036322">
    <property type="entry name" value="WD40_repeat_dom_sf"/>
</dbReference>
<dbReference type="InterPro" id="IPR001680">
    <property type="entry name" value="WD40_rpt"/>
</dbReference>
<dbReference type="PANTHER" id="PTHR12296:SF21">
    <property type="entry name" value="DENN DOMAIN-CONTAINING PROTEIN 3"/>
    <property type="match status" value="1"/>
</dbReference>
<dbReference type="PANTHER" id="PTHR12296">
    <property type="entry name" value="DENN DOMAIN-CONTAINING PROTEIN 4"/>
    <property type="match status" value="1"/>
</dbReference>
<dbReference type="Pfam" id="PF02141">
    <property type="entry name" value="DENN"/>
    <property type="match status" value="1"/>
</dbReference>
<dbReference type="SMART" id="SM00801">
    <property type="entry name" value="dDENN"/>
    <property type="match status" value="1"/>
</dbReference>
<dbReference type="SMART" id="SM00799">
    <property type="entry name" value="DENN"/>
    <property type="match status" value="1"/>
</dbReference>
<dbReference type="SMART" id="SM00320">
    <property type="entry name" value="WD40"/>
    <property type="match status" value="3"/>
</dbReference>
<dbReference type="SUPFAM" id="SSF50978">
    <property type="entry name" value="WD40 repeat-like"/>
    <property type="match status" value="1"/>
</dbReference>
<dbReference type="PROSITE" id="PS50211">
    <property type="entry name" value="DENN"/>
    <property type="match status" value="1"/>
</dbReference>
<dbReference type="PROSITE" id="PS00678">
    <property type="entry name" value="WD_REPEATS_1"/>
    <property type="match status" value="1"/>
</dbReference>
<dbReference type="PROSITE" id="PS50082">
    <property type="entry name" value="WD_REPEATS_2"/>
    <property type="match status" value="1"/>
</dbReference>
<dbReference type="PROSITE" id="PS50294">
    <property type="entry name" value="WD_REPEATS_REGION"/>
    <property type="match status" value="1"/>
</dbReference>
<accession>A2RT67</accession>
<accession>B2RQ75</accession>
<accession>Q69ZX2</accession>
<accession>Q8C6V5</accession>